<feature type="signal peptide" evidence="1">
    <location>
        <begin position="1"/>
        <end position="19"/>
    </location>
</feature>
<feature type="chain" id="PRO_1000026710" description="Tol-Pal system protein TolB" evidence="1">
    <location>
        <begin position="20"/>
        <end position="444"/>
    </location>
</feature>
<gene>
    <name evidence="1" type="primary">tolB</name>
    <name type="ordered locus">A1G_02315</name>
</gene>
<accession>A8GRJ1</accession>
<proteinExistence type="inferred from homology"/>
<dbReference type="EMBL" id="CP000848">
    <property type="protein sequence ID" value="ABV76016.1"/>
    <property type="molecule type" value="Genomic_DNA"/>
</dbReference>
<dbReference type="RefSeq" id="WP_012150614.1">
    <property type="nucleotide sequence ID" value="NZ_CP121767.1"/>
</dbReference>
<dbReference type="SMR" id="A8GRJ1"/>
<dbReference type="GeneID" id="79937178"/>
<dbReference type="KEGG" id="rri:A1G_02315"/>
<dbReference type="HOGENOM" id="CLU_047123_0_0_5"/>
<dbReference type="Proteomes" id="UP000006832">
    <property type="component" value="Chromosome"/>
</dbReference>
<dbReference type="GO" id="GO:0042597">
    <property type="term" value="C:periplasmic space"/>
    <property type="evidence" value="ECO:0007669"/>
    <property type="project" value="UniProtKB-SubCell"/>
</dbReference>
<dbReference type="GO" id="GO:0051301">
    <property type="term" value="P:cell division"/>
    <property type="evidence" value="ECO:0007669"/>
    <property type="project" value="UniProtKB-UniRule"/>
</dbReference>
<dbReference type="GO" id="GO:0017038">
    <property type="term" value="P:protein import"/>
    <property type="evidence" value="ECO:0007669"/>
    <property type="project" value="InterPro"/>
</dbReference>
<dbReference type="Gene3D" id="2.120.10.30">
    <property type="entry name" value="TolB, C-terminal domain"/>
    <property type="match status" value="1"/>
</dbReference>
<dbReference type="Gene3D" id="3.40.50.10070">
    <property type="entry name" value="TolB, N-terminal domain"/>
    <property type="match status" value="1"/>
</dbReference>
<dbReference type="HAMAP" id="MF_00671">
    <property type="entry name" value="TolB"/>
    <property type="match status" value="1"/>
</dbReference>
<dbReference type="InterPro" id="IPR011042">
    <property type="entry name" value="6-blade_b-propeller_TolB-like"/>
</dbReference>
<dbReference type="InterPro" id="IPR011659">
    <property type="entry name" value="PD40"/>
</dbReference>
<dbReference type="InterPro" id="IPR014167">
    <property type="entry name" value="Tol-Pal_TolB"/>
</dbReference>
<dbReference type="InterPro" id="IPR007195">
    <property type="entry name" value="TolB_N"/>
</dbReference>
<dbReference type="NCBIfam" id="TIGR02800">
    <property type="entry name" value="propeller_TolB"/>
    <property type="match status" value="1"/>
</dbReference>
<dbReference type="PANTHER" id="PTHR36842:SF1">
    <property type="entry name" value="PROTEIN TOLB"/>
    <property type="match status" value="1"/>
</dbReference>
<dbReference type="PANTHER" id="PTHR36842">
    <property type="entry name" value="PROTEIN TOLB HOMOLOG"/>
    <property type="match status" value="1"/>
</dbReference>
<dbReference type="Pfam" id="PF07676">
    <property type="entry name" value="PD40"/>
    <property type="match status" value="4"/>
</dbReference>
<dbReference type="Pfam" id="PF04052">
    <property type="entry name" value="TolB_N"/>
    <property type="match status" value="1"/>
</dbReference>
<dbReference type="SUPFAM" id="SSF52964">
    <property type="entry name" value="TolB, N-terminal domain"/>
    <property type="match status" value="1"/>
</dbReference>
<dbReference type="SUPFAM" id="SSF69304">
    <property type="entry name" value="Tricorn protease N-terminal domain"/>
    <property type="match status" value="1"/>
</dbReference>
<organism>
    <name type="scientific">Rickettsia rickettsii (strain Sheila Smith)</name>
    <dbReference type="NCBI Taxonomy" id="392021"/>
    <lineage>
        <taxon>Bacteria</taxon>
        <taxon>Pseudomonadati</taxon>
        <taxon>Pseudomonadota</taxon>
        <taxon>Alphaproteobacteria</taxon>
        <taxon>Rickettsiales</taxon>
        <taxon>Rickettsiaceae</taxon>
        <taxon>Rickettsieae</taxon>
        <taxon>Rickettsia</taxon>
        <taxon>spotted fever group</taxon>
    </lineage>
</organism>
<protein>
    <recommendedName>
        <fullName evidence="1">Tol-Pal system protein TolB</fullName>
    </recommendedName>
</protein>
<name>TOLB_RICRS</name>
<keyword id="KW-0131">Cell cycle</keyword>
<keyword id="KW-0132">Cell division</keyword>
<keyword id="KW-0574">Periplasm</keyword>
<keyword id="KW-0732">Signal</keyword>
<comment type="function">
    <text evidence="1">Part of the Tol-Pal system, which plays a role in outer membrane invagination during cell division and is important for maintaining outer membrane integrity.</text>
</comment>
<comment type="subunit">
    <text evidence="1">The Tol-Pal system is composed of five core proteins: the inner membrane proteins TolA, TolQ and TolR, the periplasmic protein TolB and the outer membrane protein Pal. They form a network linking the inner and outer membranes and the peptidoglycan layer.</text>
</comment>
<comment type="subcellular location">
    <subcellularLocation>
        <location evidence="1">Periplasm</location>
    </subcellularLocation>
</comment>
<comment type="similarity">
    <text evidence="1">Belongs to the TolB family.</text>
</comment>
<sequence length="444" mass="49167">MRNIIYFILSLLFSVTSYALETINIEHGRADPTPIAVNKFYADNSAADVLGHDMVKVISNDLKLSGLFRPISAASFIEEKTGIEYKPLFAAWRQINASLLVNGEVKKLESGKFQISFILWDTLLEKQLVGEILEVPKNLWRRAAHKIADKIYEKITGDAGYFDTKIVYVSESSSLPKIKRIALMDYDGANNKYLTNGKSLVLTPRFARSADKIFYVSYATKRRVLVYEKDLKTGKESVVGDFPGISFAPRFSPDGRKAVMSIAKNGSTHIYEIDLATKRLHKLTDGFGINTSPSYSPDGTKIVYNSDRNGVPQLYIMNSDGSDVQRISFGGGSYAAPSWSPRGDYIAFTKITKGDGGKTFNIGIMKACPQDNKNSERIITSGYLVESPCWSPNGRVIMFAKGWPSSSKAPGKNKIFAIDLTGHNEREIMTPADASDPEWSGVLN</sequence>
<reference key="1">
    <citation type="submission" date="2007-09" db="EMBL/GenBank/DDBJ databases">
        <title>Complete genome sequence of Rickettsia rickettsii.</title>
        <authorList>
            <person name="Madan A."/>
            <person name="Fahey J."/>
            <person name="Helton E."/>
            <person name="Ketteman M."/>
            <person name="Madan A."/>
            <person name="Rodrigues S."/>
            <person name="Sanchez A."/>
            <person name="Dasch G."/>
            <person name="Eremeeva M."/>
        </authorList>
    </citation>
    <scope>NUCLEOTIDE SEQUENCE [LARGE SCALE GENOMIC DNA]</scope>
    <source>
        <strain>Sheila Smith</strain>
    </source>
</reference>
<evidence type="ECO:0000255" key="1">
    <source>
        <dbReference type="HAMAP-Rule" id="MF_00671"/>
    </source>
</evidence>